<evidence type="ECO:0000255" key="1">
    <source>
        <dbReference type="HAMAP-Rule" id="MF_01208"/>
    </source>
</evidence>
<evidence type="ECO:0007829" key="2">
    <source>
        <dbReference type="PDB" id="5HKF"/>
    </source>
</evidence>
<evidence type="ECO:0007829" key="3">
    <source>
        <dbReference type="PDB" id="5HKI"/>
    </source>
</evidence>
<evidence type="ECO:0007829" key="4">
    <source>
        <dbReference type="PDB" id="5HKL"/>
    </source>
</evidence>
<dbReference type="EC" id="2.4.2.10" evidence="1"/>
<dbReference type="EMBL" id="AL123456">
    <property type="protein sequence ID" value="CCP43112.1"/>
    <property type="molecule type" value="Genomic_DNA"/>
</dbReference>
<dbReference type="PIR" id="A70834">
    <property type="entry name" value="A70834"/>
</dbReference>
<dbReference type="RefSeq" id="WP_003401894.1">
    <property type="nucleotide sequence ID" value="NZ_NVQJ01000002.1"/>
</dbReference>
<dbReference type="RefSeq" id="YP_177723.1">
    <property type="nucleotide sequence ID" value="NC_000962.3"/>
</dbReference>
<dbReference type="PDB" id="5HKF">
    <property type="method" value="X-ray"/>
    <property type="resolution" value="2.25 A"/>
    <property type="chains" value="A/B=1-179"/>
</dbReference>
<dbReference type="PDB" id="5HKI">
    <property type="method" value="X-ray"/>
    <property type="resolution" value="2.40 A"/>
    <property type="chains" value="A/B/C/D=1-179"/>
</dbReference>
<dbReference type="PDB" id="5HKL">
    <property type="method" value="X-ray"/>
    <property type="resolution" value="1.90 A"/>
    <property type="chains" value="A/B=1-179"/>
</dbReference>
<dbReference type="PDBsum" id="5HKF"/>
<dbReference type="PDBsum" id="5HKI"/>
<dbReference type="PDBsum" id="5HKL"/>
<dbReference type="SMR" id="P9WHK9"/>
<dbReference type="FunCoup" id="P9WHK9">
    <property type="interactions" value="185"/>
</dbReference>
<dbReference type="STRING" id="83332.Rv0382c"/>
<dbReference type="PaxDb" id="83332-Rv0382c"/>
<dbReference type="DNASU" id="886443"/>
<dbReference type="GeneID" id="45424348"/>
<dbReference type="GeneID" id="886443"/>
<dbReference type="KEGG" id="mtu:Rv0382c"/>
<dbReference type="KEGG" id="mtv:RVBD_0382c"/>
<dbReference type="TubercuList" id="Rv0382c"/>
<dbReference type="eggNOG" id="COG0461">
    <property type="taxonomic scope" value="Bacteria"/>
</dbReference>
<dbReference type="InParanoid" id="P9WHK9"/>
<dbReference type="OrthoDB" id="1493031at2"/>
<dbReference type="PhylomeDB" id="P9WHK9"/>
<dbReference type="BRENDA" id="2.4.2.10">
    <property type="organism ID" value="3445"/>
</dbReference>
<dbReference type="UniPathway" id="UPA00070">
    <property type="reaction ID" value="UER00119"/>
</dbReference>
<dbReference type="Proteomes" id="UP000001584">
    <property type="component" value="Chromosome"/>
</dbReference>
<dbReference type="GO" id="GO:0000287">
    <property type="term" value="F:magnesium ion binding"/>
    <property type="evidence" value="ECO:0007669"/>
    <property type="project" value="UniProtKB-UniRule"/>
</dbReference>
<dbReference type="GO" id="GO:0004588">
    <property type="term" value="F:orotate phosphoribosyltransferase activity"/>
    <property type="evidence" value="ECO:0000318"/>
    <property type="project" value="GO_Central"/>
</dbReference>
<dbReference type="GO" id="GO:0044205">
    <property type="term" value="P:'de novo' UMP biosynthetic process"/>
    <property type="evidence" value="ECO:0007669"/>
    <property type="project" value="UniProtKB-UniRule"/>
</dbReference>
<dbReference type="GO" id="GO:0019856">
    <property type="term" value="P:pyrimidine nucleobase biosynthetic process"/>
    <property type="evidence" value="ECO:0000318"/>
    <property type="project" value="GO_Central"/>
</dbReference>
<dbReference type="GO" id="GO:0006222">
    <property type="term" value="P:UMP biosynthetic process"/>
    <property type="evidence" value="ECO:0000318"/>
    <property type="project" value="GO_Central"/>
</dbReference>
<dbReference type="CDD" id="cd06223">
    <property type="entry name" value="PRTases_typeI"/>
    <property type="match status" value="1"/>
</dbReference>
<dbReference type="FunFam" id="3.40.50.2020:FF:000029">
    <property type="entry name" value="Orotate phosphoribosyltransferase"/>
    <property type="match status" value="1"/>
</dbReference>
<dbReference type="Gene3D" id="3.40.50.2020">
    <property type="match status" value="1"/>
</dbReference>
<dbReference type="HAMAP" id="MF_01208">
    <property type="entry name" value="PyrE"/>
    <property type="match status" value="1"/>
</dbReference>
<dbReference type="InterPro" id="IPR023031">
    <property type="entry name" value="OPRT"/>
</dbReference>
<dbReference type="InterPro" id="IPR004467">
    <property type="entry name" value="Or_phspho_trans_dom"/>
</dbReference>
<dbReference type="InterPro" id="IPR000836">
    <property type="entry name" value="PRibTrfase_dom"/>
</dbReference>
<dbReference type="InterPro" id="IPR029057">
    <property type="entry name" value="PRTase-like"/>
</dbReference>
<dbReference type="NCBIfam" id="TIGR00336">
    <property type="entry name" value="pyrE"/>
    <property type="match status" value="1"/>
</dbReference>
<dbReference type="PANTHER" id="PTHR19278">
    <property type="entry name" value="OROTATE PHOSPHORIBOSYLTRANSFERASE"/>
    <property type="match status" value="1"/>
</dbReference>
<dbReference type="PANTHER" id="PTHR19278:SF9">
    <property type="entry name" value="URIDINE 5'-MONOPHOSPHATE SYNTHASE"/>
    <property type="match status" value="1"/>
</dbReference>
<dbReference type="Pfam" id="PF00156">
    <property type="entry name" value="Pribosyltran"/>
    <property type="match status" value="1"/>
</dbReference>
<dbReference type="SUPFAM" id="SSF53271">
    <property type="entry name" value="PRTase-like"/>
    <property type="match status" value="1"/>
</dbReference>
<feature type="chain" id="PRO_0000110712" description="Orotate phosphoribosyltransferase">
    <location>
        <begin position="1"/>
        <end position="179"/>
    </location>
</feature>
<feature type="binding site" evidence="1">
    <location>
        <position position="94"/>
    </location>
    <ligand>
        <name>5-phospho-alpha-D-ribose 1-diphosphate</name>
        <dbReference type="ChEBI" id="CHEBI:58017"/>
        <note>ligand shared between dimeric partners</note>
    </ligand>
</feature>
<feature type="binding site" description="in other chain" evidence="1">
    <location>
        <position position="95"/>
    </location>
    <ligand>
        <name>5-phospho-alpha-D-ribose 1-diphosphate</name>
        <dbReference type="ChEBI" id="CHEBI:58017"/>
        <note>ligand shared between dimeric partners</note>
    </ligand>
</feature>
<feature type="binding site" evidence="1">
    <location>
        <position position="98"/>
    </location>
    <ligand>
        <name>5-phospho-alpha-D-ribose 1-diphosphate</name>
        <dbReference type="ChEBI" id="CHEBI:58017"/>
        <note>ligand shared between dimeric partners</note>
    </ligand>
</feature>
<feature type="binding site" evidence="1">
    <location>
        <position position="100"/>
    </location>
    <ligand>
        <name>5-phospho-alpha-D-ribose 1-diphosphate</name>
        <dbReference type="ChEBI" id="CHEBI:58017"/>
        <note>ligand shared between dimeric partners</note>
    </ligand>
</feature>
<feature type="binding site" description="in other chain" evidence="1">
    <location>
        <begin position="120"/>
        <end position="128"/>
    </location>
    <ligand>
        <name>5-phospho-alpha-D-ribose 1-diphosphate</name>
        <dbReference type="ChEBI" id="CHEBI:58017"/>
        <note>ligand shared between dimeric partners</note>
    </ligand>
</feature>
<feature type="binding site" evidence="1">
    <location>
        <position position="124"/>
    </location>
    <ligand>
        <name>orotate</name>
        <dbReference type="ChEBI" id="CHEBI:30839"/>
    </ligand>
</feature>
<feature type="binding site" evidence="1">
    <location>
        <position position="152"/>
    </location>
    <ligand>
        <name>orotate</name>
        <dbReference type="ChEBI" id="CHEBI:30839"/>
    </ligand>
</feature>
<feature type="helix" evidence="4">
    <location>
        <begin position="4"/>
        <end position="17"/>
    </location>
</feature>
<feature type="strand" evidence="4">
    <location>
        <begin position="18"/>
        <end position="24"/>
    </location>
</feature>
<feature type="strand" evidence="2">
    <location>
        <begin position="26"/>
        <end position="28"/>
    </location>
</feature>
<feature type="strand" evidence="4">
    <location>
        <begin position="30"/>
        <end position="35"/>
    </location>
</feature>
<feature type="helix" evidence="4">
    <location>
        <begin position="38"/>
        <end position="41"/>
    </location>
</feature>
<feature type="helix" evidence="4">
    <location>
        <begin position="44"/>
        <end position="57"/>
    </location>
</feature>
<feature type="turn" evidence="4">
    <location>
        <begin position="58"/>
        <end position="60"/>
    </location>
</feature>
<feature type="strand" evidence="4">
    <location>
        <begin position="64"/>
        <end position="69"/>
    </location>
</feature>
<feature type="turn" evidence="4">
    <location>
        <begin position="70"/>
        <end position="72"/>
    </location>
</feature>
<feature type="helix" evidence="4">
    <location>
        <begin position="73"/>
        <end position="82"/>
    </location>
</feature>
<feature type="strand" evidence="4">
    <location>
        <begin position="83"/>
        <end position="86"/>
    </location>
</feature>
<feature type="strand" evidence="4">
    <location>
        <begin position="89"/>
        <end position="93"/>
    </location>
</feature>
<feature type="strand" evidence="3">
    <location>
        <begin position="99"/>
        <end position="102"/>
    </location>
</feature>
<feature type="strand" evidence="4">
    <location>
        <begin position="106"/>
        <end position="109"/>
    </location>
</feature>
<feature type="strand" evidence="4">
    <location>
        <begin position="114"/>
        <end position="126"/>
    </location>
</feature>
<feature type="helix" evidence="4">
    <location>
        <begin position="127"/>
        <end position="138"/>
    </location>
</feature>
<feature type="strand" evidence="4">
    <location>
        <begin position="142"/>
        <end position="151"/>
    </location>
</feature>
<feature type="strand" evidence="4">
    <location>
        <begin position="153"/>
        <end position="155"/>
    </location>
</feature>
<feature type="helix" evidence="4">
    <location>
        <begin position="156"/>
        <end position="161"/>
    </location>
</feature>
<feature type="turn" evidence="4">
    <location>
        <begin position="162"/>
        <end position="164"/>
    </location>
</feature>
<feature type="strand" evidence="4">
    <location>
        <begin position="167"/>
        <end position="171"/>
    </location>
</feature>
<feature type="helix" evidence="4">
    <location>
        <begin position="173"/>
        <end position="176"/>
    </location>
</feature>
<gene>
    <name evidence="1" type="primary">pyrE</name>
    <name type="synonym">umpA</name>
    <name type="ordered locus">Rv0382c</name>
    <name type="ORF">MTV036.17c</name>
</gene>
<name>PYRE_MYCTU</name>
<reference key="1">
    <citation type="journal article" date="1998" name="Nature">
        <title>Deciphering the biology of Mycobacterium tuberculosis from the complete genome sequence.</title>
        <authorList>
            <person name="Cole S.T."/>
            <person name="Brosch R."/>
            <person name="Parkhill J."/>
            <person name="Garnier T."/>
            <person name="Churcher C.M."/>
            <person name="Harris D.E."/>
            <person name="Gordon S.V."/>
            <person name="Eiglmeier K."/>
            <person name="Gas S."/>
            <person name="Barry C.E. III"/>
            <person name="Tekaia F."/>
            <person name="Badcock K."/>
            <person name="Basham D."/>
            <person name="Brown D."/>
            <person name="Chillingworth T."/>
            <person name="Connor R."/>
            <person name="Davies R.M."/>
            <person name="Devlin K."/>
            <person name="Feltwell T."/>
            <person name="Gentles S."/>
            <person name="Hamlin N."/>
            <person name="Holroyd S."/>
            <person name="Hornsby T."/>
            <person name="Jagels K."/>
            <person name="Krogh A."/>
            <person name="McLean J."/>
            <person name="Moule S."/>
            <person name="Murphy L.D."/>
            <person name="Oliver S."/>
            <person name="Osborne J."/>
            <person name="Quail M.A."/>
            <person name="Rajandream M.A."/>
            <person name="Rogers J."/>
            <person name="Rutter S."/>
            <person name="Seeger K."/>
            <person name="Skelton S."/>
            <person name="Squares S."/>
            <person name="Squares R."/>
            <person name="Sulston J.E."/>
            <person name="Taylor K."/>
            <person name="Whitehead S."/>
            <person name="Barrell B.G."/>
        </authorList>
    </citation>
    <scope>NUCLEOTIDE SEQUENCE [LARGE SCALE GENOMIC DNA]</scope>
    <source>
        <strain>ATCC 25618 / H37Rv</strain>
    </source>
</reference>
<reference key="2">
    <citation type="journal article" date="2008" name="BMC Syst. Biol.">
        <title>targetTB: a target identification pipeline for Mycobacterium tuberculosis through an interactome, reactome and genome-scale structural analysis.</title>
        <authorList>
            <person name="Raman K."/>
            <person name="Yeturu K."/>
            <person name="Chandra N."/>
        </authorList>
    </citation>
    <scope>IDENTIFICATION AS A DRUG TARGET [LARGE SCALE ANALYSIS]</scope>
</reference>
<reference key="3">
    <citation type="journal article" date="2011" name="Mol. Cell. Proteomics">
        <title>Proteogenomic analysis of Mycobacterium tuberculosis by high resolution mass spectrometry.</title>
        <authorList>
            <person name="Kelkar D.S."/>
            <person name="Kumar D."/>
            <person name="Kumar P."/>
            <person name="Balakrishnan L."/>
            <person name="Muthusamy B."/>
            <person name="Yadav A.K."/>
            <person name="Shrivastava P."/>
            <person name="Marimuthu A."/>
            <person name="Anand S."/>
            <person name="Sundaram H."/>
            <person name="Kingsbury R."/>
            <person name="Harsha H.C."/>
            <person name="Nair B."/>
            <person name="Prasad T.S."/>
            <person name="Chauhan D.S."/>
            <person name="Katoch K."/>
            <person name="Katoch V.M."/>
            <person name="Kumar P."/>
            <person name="Chaerkady R."/>
            <person name="Ramachandran S."/>
            <person name="Dash D."/>
            <person name="Pandey A."/>
        </authorList>
    </citation>
    <scope>IDENTIFICATION BY MASS SPECTROMETRY [LARGE SCALE ANALYSIS]</scope>
    <source>
        <strain>ATCC 25618 / H37Rv</strain>
    </source>
</reference>
<sequence>MAGPDRAELAELVRRLSVVHGRVTLSSGREADYYVDLRRATLHHRASALIGRLMRELTADWDYSVVGGLTLGADPVATAIMHAPGRPIDAFVVRKSAKAHGMQRLIEGSEVTGQRVLVVEDTSTTGNSALTAVHAVQDVGGEVVGVATVVDRATGAAEAIEAEGLRYRSVLGLADLGLD</sequence>
<comment type="function">
    <text evidence="1">Catalyzes the transfer of a ribosyl phosphate group from 5-phosphoribose 1-diphosphate to orotate, leading to the formation of orotidine monophosphate (OMP).</text>
</comment>
<comment type="catalytic activity">
    <reaction evidence="1">
        <text>orotidine 5'-phosphate + diphosphate = orotate + 5-phospho-alpha-D-ribose 1-diphosphate</text>
        <dbReference type="Rhea" id="RHEA:10380"/>
        <dbReference type="ChEBI" id="CHEBI:30839"/>
        <dbReference type="ChEBI" id="CHEBI:33019"/>
        <dbReference type="ChEBI" id="CHEBI:57538"/>
        <dbReference type="ChEBI" id="CHEBI:58017"/>
        <dbReference type="EC" id="2.4.2.10"/>
    </reaction>
</comment>
<comment type="cofactor">
    <cofactor evidence="1">
        <name>Mg(2+)</name>
        <dbReference type="ChEBI" id="CHEBI:18420"/>
    </cofactor>
</comment>
<comment type="pathway">
    <text evidence="1">Pyrimidine metabolism; UMP biosynthesis via de novo pathway; UMP from orotate: step 1/2.</text>
</comment>
<comment type="subunit">
    <text evidence="1">Homodimer.</text>
</comment>
<comment type="miscellaneous">
    <text>Was identified as a high-confidence drug target.</text>
</comment>
<comment type="similarity">
    <text evidence="1">Belongs to the purine/pyrimidine phosphoribosyltransferase family. PyrE subfamily.</text>
</comment>
<keyword id="KW-0002">3D-structure</keyword>
<keyword id="KW-0328">Glycosyltransferase</keyword>
<keyword id="KW-0460">Magnesium</keyword>
<keyword id="KW-0665">Pyrimidine biosynthesis</keyword>
<keyword id="KW-1185">Reference proteome</keyword>
<keyword id="KW-0808">Transferase</keyword>
<protein>
    <recommendedName>
        <fullName evidence="1">Orotate phosphoribosyltransferase</fullName>
        <shortName evidence="1">OPRT</shortName>
        <shortName evidence="1">OPRTase</shortName>
        <ecNumber evidence="1">2.4.2.10</ecNumber>
    </recommendedName>
</protein>
<accession>P9WHK9</accession>
<accession>L0T6H8</accession>
<accession>O53717</accession>
<accession>P0A5U0</accession>
<organism>
    <name type="scientific">Mycobacterium tuberculosis (strain ATCC 25618 / H37Rv)</name>
    <dbReference type="NCBI Taxonomy" id="83332"/>
    <lineage>
        <taxon>Bacteria</taxon>
        <taxon>Bacillati</taxon>
        <taxon>Actinomycetota</taxon>
        <taxon>Actinomycetes</taxon>
        <taxon>Mycobacteriales</taxon>
        <taxon>Mycobacteriaceae</taxon>
        <taxon>Mycobacterium</taxon>
        <taxon>Mycobacterium tuberculosis complex</taxon>
    </lineage>
</organism>
<proteinExistence type="evidence at protein level"/>